<sequence length="257" mass="30324">MIHSRKLRLWLYLVLLAVFIGACGMKKEESSKDKQIKENFNKTLSLYPTKNLEDFYDKEGFRDEEFEKGDKGTWIIHSKMTIETNGKNMESRGLVLYVDRNTRTTKGEFIVRELWEDKKGYSRSKEKEYPVKMEHNKIIPTKPIADDKLRKEIEDFKFFVQYGDFKDINDYKDGDISYNPNVPSYSAKYQLSNNDYNVKQLRKRYDIPTKKAPKLLLKGDGDLKGSSIGHKNLEFIFIENKEENIYFTDSINFKPTE</sequence>
<organism>
    <name type="scientific">Staphylococcus aureus (strain Mu50 / ATCC 700699)</name>
    <dbReference type="NCBI Taxonomy" id="158878"/>
    <lineage>
        <taxon>Bacteria</taxon>
        <taxon>Bacillati</taxon>
        <taxon>Bacillota</taxon>
        <taxon>Bacilli</taxon>
        <taxon>Bacillales</taxon>
        <taxon>Staphylococcaceae</taxon>
        <taxon>Staphylococcus</taxon>
    </lineage>
</organism>
<protein>
    <recommendedName>
        <fullName>Uncharacterized lipoprotein SAV2487</fullName>
    </recommendedName>
</protein>
<name>Y2487_STAAM</name>
<comment type="subcellular location">
    <subcellularLocation>
        <location evidence="1">Cell membrane</location>
        <topology evidence="1">Lipid-anchor</topology>
    </subcellularLocation>
</comment>
<comment type="similarity">
    <text evidence="2">Belongs to the staphylococcal tandem lipoprotein family.</text>
</comment>
<comment type="sequence caution" evidence="2">
    <conflict type="erroneous initiation">
        <sequence resource="EMBL-CDS" id="BAB58649"/>
    </conflict>
</comment>
<accession>Q99RE6</accession>
<proteinExistence type="inferred from homology"/>
<dbReference type="EMBL" id="BA000017">
    <property type="protein sequence ID" value="BAB58649.1"/>
    <property type="status" value="ALT_INIT"/>
    <property type="molecule type" value="Genomic_DNA"/>
</dbReference>
<dbReference type="SMR" id="Q99RE6"/>
<dbReference type="KEGG" id="sav:SAV2487"/>
<dbReference type="HOGENOM" id="CLU_071589_0_1_9"/>
<dbReference type="Proteomes" id="UP000002481">
    <property type="component" value="Chromosome"/>
</dbReference>
<dbReference type="GO" id="GO:0005886">
    <property type="term" value="C:plasma membrane"/>
    <property type="evidence" value="ECO:0007669"/>
    <property type="project" value="UniProtKB-SubCell"/>
</dbReference>
<dbReference type="Gene3D" id="2.50.20.40">
    <property type="match status" value="1"/>
</dbReference>
<dbReference type="InterPro" id="IPR007595">
    <property type="entry name" value="Csa"/>
</dbReference>
<dbReference type="InterPro" id="IPR038641">
    <property type="entry name" value="Csa_sf"/>
</dbReference>
<dbReference type="NCBIfam" id="TIGR01742">
    <property type="entry name" value="SA_tandem_lipo"/>
    <property type="match status" value="1"/>
</dbReference>
<dbReference type="Pfam" id="PF04507">
    <property type="entry name" value="DUF576"/>
    <property type="match status" value="1"/>
</dbReference>
<dbReference type="PROSITE" id="PS51257">
    <property type="entry name" value="PROKAR_LIPOPROTEIN"/>
    <property type="match status" value="1"/>
</dbReference>
<evidence type="ECO:0000255" key="1">
    <source>
        <dbReference type="PROSITE-ProRule" id="PRU00303"/>
    </source>
</evidence>
<evidence type="ECO:0000305" key="2"/>
<feature type="signal peptide" evidence="1">
    <location>
        <begin position="1"/>
        <end position="22"/>
    </location>
</feature>
<feature type="chain" id="PRO_0000282122" description="Uncharacterized lipoprotein SAV2487">
    <location>
        <begin position="23"/>
        <end position="257"/>
    </location>
</feature>
<feature type="lipid moiety-binding region" description="N-palmitoyl cysteine" evidence="1">
    <location>
        <position position="23"/>
    </location>
</feature>
<feature type="lipid moiety-binding region" description="S-diacylglycerol cysteine" evidence="1">
    <location>
        <position position="23"/>
    </location>
</feature>
<reference key="1">
    <citation type="journal article" date="2001" name="Lancet">
        <title>Whole genome sequencing of meticillin-resistant Staphylococcus aureus.</title>
        <authorList>
            <person name="Kuroda M."/>
            <person name="Ohta T."/>
            <person name="Uchiyama I."/>
            <person name="Baba T."/>
            <person name="Yuzawa H."/>
            <person name="Kobayashi I."/>
            <person name="Cui L."/>
            <person name="Oguchi A."/>
            <person name="Aoki K."/>
            <person name="Nagai Y."/>
            <person name="Lian J.-Q."/>
            <person name="Ito T."/>
            <person name="Kanamori M."/>
            <person name="Matsumaru H."/>
            <person name="Maruyama A."/>
            <person name="Murakami H."/>
            <person name="Hosoyama A."/>
            <person name="Mizutani-Ui Y."/>
            <person name="Takahashi N.K."/>
            <person name="Sawano T."/>
            <person name="Inoue R."/>
            <person name="Kaito C."/>
            <person name="Sekimizu K."/>
            <person name="Hirakawa H."/>
            <person name="Kuhara S."/>
            <person name="Goto S."/>
            <person name="Yabuzaki J."/>
            <person name="Kanehisa M."/>
            <person name="Yamashita A."/>
            <person name="Oshima K."/>
            <person name="Furuya K."/>
            <person name="Yoshino C."/>
            <person name="Shiba T."/>
            <person name="Hattori M."/>
            <person name="Ogasawara N."/>
            <person name="Hayashi H."/>
            <person name="Hiramatsu K."/>
        </authorList>
    </citation>
    <scope>NUCLEOTIDE SEQUENCE [LARGE SCALE GENOMIC DNA]</scope>
    <source>
        <strain>Mu50 / ATCC 700699</strain>
    </source>
</reference>
<gene>
    <name type="ordered locus">SAV2487</name>
</gene>
<keyword id="KW-1003">Cell membrane</keyword>
<keyword id="KW-0449">Lipoprotein</keyword>
<keyword id="KW-0472">Membrane</keyword>
<keyword id="KW-0564">Palmitate</keyword>
<keyword id="KW-0732">Signal</keyword>